<feature type="chain" id="PRO_0000307907" description="U11/U12 small nuclear ribonucleoprotein 35 kDa protein">
    <location>
        <begin position="1"/>
        <end position="246"/>
    </location>
</feature>
<feature type="domain" description="RRM" evidence="1">
    <location>
        <begin position="51"/>
        <end position="129"/>
    </location>
</feature>
<feature type="region of interest" description="Disordered" evidence="2">
    <location>
        <begin position="187"/>
        <end position="217"/>
    </location>
</feature>
<feature type="compositionally biased region" description="Basic and acidic residues" evidence="2">
    <location>
        <begin position="192"/>
        <end position="217"/>
    </location>
</feature>
<feature type="cross-link" description="Glycyl lysine isopeptide (Lys-Gly) (interchain with G-Cter in SUMO2)" evidence="6">
    <location>
        <position position="172"/>
    </location>
</feature>
<feature type="splice variant" id="VSP_028855" description="In isoform 2." evidence="5">
    <original>M</original>
    <variation>MKPANM</variation>
    <location>
        <position position="1"/>
    </location>
</feature>
<comment type="subunit">
    <text evidence="4">Component of the U11/U12 snRNPs that are part of the U12-type spliceosome.</text>
</comment>
<comment type="interaction">
    <interactant intactId="EBI-12938570">
        <id>Q16560-2</id>
    </interactant>
    <interactant intactId="EBI-17183751">
        <id>X5D778</id>
        <label>ANKRD11</label>
    </interactant>
    <organismsDiffer>false</organismsDiffer>
    <experiments>5</experiments>
</comment>
<comment type="interaction">
    <interactant intactId="EBI-12938570">
        <id>Q16560-2</id>
    </interactant>
    <interactant intactId="EBI-78219">
        <id>P45973</id>
        <label>CBX5</label>
    </interactant>
    <organismsDiffer>false</organismsDiffer>
    <experiments>3</experiments>
</comment>
<comment type="interaction">
    <interactant intactId="EBI-12938570">
        <id>Q16560-2</id>
    </interactant>
    <interactant intactId="EBI-10961624">
        <id>Q2TAC2-2</id>
        <label>CCDC57</label>
    </interactant>
    <organismsDiffer>false</organismsDiffer>
    <experiments>3</experiments>
</comment>
<comment type="interaction">
    <interactant intactId="EBI-12938570">
        <id>Q16560-2</id>
    </interactant>
    <interactant intactId="EBI-356687">
        <id>P40227</id>
        <label>CCT6A</label>
    </interactant>
    <organismsDiffer>false</organismsDiffer>
    <experiments>3</experiments>
</comment>
<comment type="interaction">
    <interactant intactId="EBI-12938570">
        <id>Q16560-2</id>
    </interactant>
    <interactant intactId="EBI-456371">
        <id>P61024</id>
        <label>CKS1B</label>
    </interactant>
    <organismsDiffer>false</organismsDiffer>
    <experiments>3</experiments>
</comment>
<comment type="interaction">
    <interactant intactId="EBI-12938570">
        <id>Q16560-2</id>
    </interactant>
    <interactant intactId="EBI-745579">
        <id>P49761</id>
        <label>CLK3</label>
    </interactant>
    <organismsDiffer>false</organismsDiffer>
    <experiments>3</experiments>
</comment>
<comment type="interaction">
    <interactant intactId="EBI-12938570">
        <id>Q16560-2</id>
    </interactant>
    <interactant intactId="EBI-739467">
        <id>Q9H8Y8</id>
        <label>GORASP2</label>
    </interactant>
    <organismsDiffer>false</organismsDiffer>
    <experiments>3</experiments>
</comment>
<comment type="interaction">
    <interactant intactId="EBI-12938570">
        <id>Q16560-2</id>
    </interactant>
    <interactant intactId="EBI-742388">
        <id>Q9H8W4</id>
        <label>PLEKHF2</label>
    </interactant>
    <organismsDiffer>false</organismsDiffer>
    <experiments>3</experiments>
</comment>
<comment type="interaction">
    <interactant intactId="EBI-12938570">
        <id>Q16560-2</id>
    </interactant>
    <interactant intactId="EBI-476586">
        <id>P17612</id>
        <label>PRKACA</label>
    </interactant>
    <organismsDiffer>false</organismsDiffer>
    <experiments>3</experiments>
</comment>
<comment type="interaction">
    <interactant intactId="EBI-12938570">
        <id>Q16560-2</id>
    </interactant>
    <interactant intactId="EBI-8840191">
        <id>P20340-2</id>
        <label>RAB6A</label>
    </interactant>
    <organismsDiffer>false</organismsDiffer>
    <experiments>3</experiments>
</comment>
<comment type="interaction">
    <interactant intactId="EBI-12938570">
        <id>Q16560-2</id>
    </interactant>
    <interactant intactId="EBI-17181801">
        <id>P0C264</id>
        <label>SBK3</label>
    </interactant>
    <organismsDiffer>false</organismsDiffer>
    <experiments>3</experiments>
</comment>
<comment type="interaction">
    <interactant intactId="EBI-12938570">
        <id>Q16560-2</id>
    </interactant>
    <interactant intactId="EBI-350723">
        <id>P50454</id>
        <label>SERPINH1</label>
    </interactant>
    <organismsDiffer>false</organismsDiffer>
    <experiments>3</experiments>
</comment>
<comment type="interaction">
    <interactant intactId="EBI-12938570">
        <id>Q16560-2</id>
    </interactant>
    <interactant intactId="EBI-1760638">
        <id>Q92966</id>
        <label>SNAPC3</label>
    </interactant>
    <organismsDiffer>false</organismsDiffer>
    <experiments>3</experiments>
</comment>
<comment type="interaction">
    <interactant intactId="EBI-12938570">
        <id>Q16560-2</id>
    </interactant>
    <interactant intactId="EBI-745392">
        <id>Q9BSW7</id>
        <label>SYT17</label>
    </interactant>
    <organismsDiffer>false</organismsDiffer>
    <experiments>3</experiments>
</comment>
<comment type="interaction">
    <interactant intactId="EBI-12938570">
        <id>Q16560-2</id>
    </interactant>
    <interactant intactId="EBI-296151">
        <id>P37173</id>
        <label>TGFBR2</label>
    </interactant>
    <organismsDiffer>false</organismsDiffer>
    <experiments>3</experiments>
</comment>
<comment type="interaction">
    <interactant intactId="EBI-12938570">
        <id>Q16560-2</id>
    </interactant>
    <interactant intactId="EBI-632461">
        <id>Q01081</id>
        <label>U2AF1</label>
    </interactant>
    <organismsDiffer>false</organismsDiffer>
    <experiments>3</experiments>
</comment>
<comment type="interaction">
    <interactant intactId="EBI-12938570">
        <id>Q16560-2</id>
    </interactant>
    <interactant intactId="EBI-355164">
        <id>P55072</id>
        <label>VCP</label>
    </interactant>
    <organismsDiffer>false</organismsDiffer>
    <experiments>3</experiments>
</comment>
<comment type="subcellular location">
    <subcellularLocation>
        <location evidence="4">Nucleus</location>
    </subcellularLocation>
</comment>
<comment type="alternative products">
    <event type="alternative splicing"/>
    <isoform>
        <id>Q16560-1</id>
        <name>1</name>
        <sequence type="displayed"/>
    </isoform>
    <isoform>
        <id>Q16560-2</id>
        <name>2</name>
        <sequence type="described" ref="VSP_028855"/>
    </isoform>
</comment>
<comment type="tissue specificity">
    <text evidence="3">Expressed in heart, liver, skeletal muscle and pancreas.</text>
</comment>
<protein>
    <recommendedName>
        <fullName>U11/U12 small nuclear ribonucleoprotein 35 kDa protein</fullName>
        <shortName>U11/U12 snRNP 35 kDa protein</shortName>
        <shortName>U11/U12-35K</shortName>
    </recommendedName>
    <alternativeName>
        <fullName>Protein HM-1</fullName>
    </alternativeName>
    <alternativeName>
        <fullName>U1 snRNP-binding protein homolog</fullName>
    </alternativeName>
</protein>
<reference key="1">
    <citation type="journal article" date="1998" name="DNA Seq.">
        <title>Cloning and characterization of a family of cDNAs from human histiocyte macrophage cells encoding an arginine-rich basic protein related to the 70 kD U1-snRNP splicing factor.</title>
        <authorList>
            <person name="Adams D.S."/>
            <person name="Li Q."/>
            <person name="Tan X."/>
            <person name="Pero S.C."/>
            <person name="Czop J.K."/>
        </authorList>
    </citation>
    <scope>NUCLEOTIDE SEQUENCE [MRNA] (ISOFORM 1)</scope>
    <scope>TISSUE SPECIFICITY</scope>
</reference>
<reference key="2">
    <citation type="journal article" date="2004" name="Nat. Genet.">
        <title>Complete sequencing and characterization of 21,243 full-length human cDNAs.</title>
        <authorList>
            <person name="Ota T."/>
            <person name="Suzuki Y."/>
            <person name="Nishikawa T."/>
            <person name="Otsuki T."/>
            <person name="Sugiyama T."/>
            <person name="Irie R."/>
            <person name="Wakamatsu A."/>
            <person name="Hayashi K."/>
            <person name="Sato H."/>
            <person name="Nagai K."/>
            <person name="Kimura K."/>
            <person name="Makita H."/>
            <person name="Sekine M."/>
            <person name="Obayashi M."/>
            <person name="Nishi T."/>
            <person name="Shibahara T."/>
            <person name="Tanaka T."/>
            <person name="Ishii S."/>
            <person name="Yamamoto J."/>
            <person name="Saito K."/>
            <person name="Kawai Y."/>
            <person name="Isono Y."/>
            <person name="Nakamura Y."/>
            <person name="Nagahari K."/>
            <person name="Murakami K."/>
            <person name="Yasuda T."/>
            <person name="Iwayanagi T."/>
            <person name="Wagatsuma M."/>
            <person name="Shiratori A."/>
            <person name="Sudo H."/>
            <person name="Hosoiri T."/>
            <person name="Kaku Y."/>
            <person name="Kodaira H."/>
            <person name="Kondo H."/>
            <person name="Sugawara M."/>
            <person name="Takahashi M."/>
            <person name="Kanda K."/>
            <person name="Yokoi T."/>
            <person name="Furuya T."/>
            <person name="Kikkawa E."/>
            <person name="Omura Y."/>
            <person name="Abe K."/>
            <person name="Kamihara K."/>
            <person name="Katsuta N."/>
            <person name="Sato K."/>
            <person name="Tanikawa M."/>
            <person name="Yamazaki M."/>
            <person name="Ninomiya K."/>
            <person name="Ishibashi T."/>
            <person name="Yamashita H."/>
            <person name="Murakawa K."/>
            <person name="Fujimori K."/>
            <person name="Tanai H."/>
            <person name="Kimata M."/>
            <person name="Watanabe M."/>
            <person name="Hiraoka S."/>
            <person name="Chiba Y."/>
            <person name="Ishida S."/>
            <person name="Ono Y."/>
            <person name="Takiguchi S."/>
            <person name="Watanabe S."/>
            <person name="Yosida M."/>
            <person name="Hotuta T."/>
            <person name="Kusano J."/>
            <person name="Kanehori K."/>
            <person name="Takahashi-Fujii A."/>
            <person name="Hara H."/>
            <person name="Tanase T.-O."/>
            <person name="Nomura Y."/>
            <person name="Togiya S."/>
            <person name="Komai F."/>
            <person name="Hara R."/>
            <person name="Takeuchi K."/>
            <person name="Arita M."/>
            <person name="Imose N."/>
            <person name="Musashino K."/>
            <person name="Yuuki H."/>
            <person name="Oshima A."/>
            <person name="Sasaki N."/>
            <person name="Aotsuka S."/>
            <person name="Yoshikawa Y."/>
            <person name="Matsunawa H."/>
            <person name="Ichihara T."/>
            <person name="Shiohata N."/>
            <person name="Sano S."/>
            <person name="Moriya S."/>
            <person name="Momiyama H."/>
            <person name="Satoh N."/>
            <person name="Takami S."/>
            <person name="Terashima Y."/>
            <person name="Suzuki O."/>
            <person name="Nakagawa S."/>
            <person name="Senoh A."/>
            <person name="Mizoguchi H."/>
            <person name="Goto Y."/>
            <person name="Shimizu F."/>
            <person name="Wakebe H."/>
            <person name="Hishigaki H."/>
            <person name="Watanabe T."/>
            <person name="Sugiyama A."/>
            <person name="Takemoto M."/>
            <person name="Kawakami B."/>
            <person name="Yamazaki M."/>
            <person name="Watanabe K."/>
            <person name="Kumagai A."/>
            <person name="Itakura S."/>
            <person name="Fukuzumi Y."/>
            <person name="Fujimori Y."/>
            <person name="Komiyama M."/>
            <person name="Tashiro H."/>
            <person name="Tanigami A."/>
            <person name="Fujiwara T."/>
            <person name="Ono T."/>
            <person name="Yamada K."/>
            <person name="Fujii Y."/>
            <person name="Ozaki K."/>
            <person name="Hirao M."/>
            <person name="Ohmori Y."/>
            <person name="Kawabata A."/>
            <person name="Hikiji T."/>
            <person name="Kobatake N."/>
            <person name="Inagaki H."/>
            <person name="Ikema Y."/>
            <person name="Okamoto S."/>
            <person name="Okitani R."/>
            <person name="Kawakami T."/>
            <person name="Noguchi S."/>
            <person name="Itoh T."/>
            <person name="Shigeta K."/>
            <person name="Senba T."/>
            <person name="Matsumura K."/>
            <person name="Nakajima Y."/>
            <person name="Mizuno T."/>
            <person name="Morinaga M."/>
            <person name="Sasaki M."/>
            <person name="Togashi T."/>
            <person name="Oyama M."/>
            <person name="Hata H."/>
            <person name="Watanabe M."/>
            <person name="Komatsu T."/>
            <person name="Mizushima-Sugano J."/>
            <person name="Satoh T."/>
            <person name="Shirai Y."/>
            <person name="Takahashi Y."/>
            <person name="Nakagawa K."/>
            <person name="Okumura K."/>
            <person name="Nagase T."/>
            <person name="Nomura N."/>
            <person name="Kikuchi H."/>
            <person name="Masuho Y."/>
            <person name="Yamashita R."/>
            <person name="Nakai K."/>
            <person name="Yada T."/>
            <person name="Nakamura Y."/>
            <person name="Ohara O."/>
            <person name="Isogai T."/>
            <person name="Sugano S."/>
        </authorList>
    </citation>
    <scope>NUCLEOTIDE SEQUENCE [LARGE SCALE MRNA] (ISOFORM 1)</scope>
    <source>
        <tissue>Thalamus</tissue>
    </source>
</reference>
<reference key="3">
    <citation type="submission" date="2005-07" db="EMBL/GenBank/DDBJ databases">
        <authorList>
            <person name="Mural R.J."/>
            <person name="Istrail S."/>
            <person name="Sutton G.G."/>
            <person name="Florea L."/>
            <person name="Halpern A.L."/>
            <person name="Mobarry C.M."/>
            <person name="Lippert R."/>
            <person name="Walenz B."/>
            <person name="Shatkay H."/>
            <person name="Dew I."/>
            <person name="Miller J.R."/>
            <person name="Flanigan M.J."/>
            <person name="Edwards N.J."/>
            <person name="Bolanos R."/>
            <person name="Fasulo D."/>
            <person name="Halldorsson B.V."/>
            <person name="Hannenhalli S."/>
            <person name="Turner R."/>
            <person name="Yooseph S."/>
            <person name="Lu F."/>
            <person name="Nusskern D.R."/>
            <person name="Shue B.C."/>
            <person name="Zheng X.H."/>
            <person name="Zhong F."/>
            <person name="Delcher A.L."/>
            <person name="Huson D.H."/>
            <person name="Kravitz S.A."/>
            <person name="Mouchard L."/>
            <person name="Reinert K."/>
            <person name="Remington K.A."/>
            <person name="Clark A.G."/>
            <person name="Waterman M.S."/>
            <person name="Eichler E.E."/>
            <person name="Adams M.D."/>
            <person name="Hunkapiller M.W."/>
            <person name="Myers E.W."/>
            <person name="Venter J.C."/>
        </authorList>
    </citation>
    <scope>NUCLEOTIDE SEQUENCE [LARGE SCALE GENOMIC DNA]</scope>
</reference>
<reference key="4">
    <citation type="journal article" date="2004" name="Genome Res.">
        <title>The status, quality, and expansion of the NIH full-length cDNA project: the Mammalian Gene Collection (MGC).</title>
        <authorList>
            <consortium name="The MGC Project Team"/>
        </authorList>
    </citation>
    <scope>NUCLEOTIDE SEQUENCE [LARGE SCALE MRNA] (ISOFORMS 1 AND 2)</scope>
    <source>
        <tissue>Brain</tissue>
        <tissue>Lung</tissue>
        <tissue>Pancreas</tissue>
    </source>
</reference>
<reference key="5">
    <citation type="journal article" date="2004" name="RNA">
        <title>The human 18S U11/U12 snRNP contains a set of novel proteins not found in the U2-dependent spliceosome.</title>
        <authorList>
            <person name="Will C.L."/>
            <person name="Schneider C."/>
            <person name="Hossbach M."/>
            <person name="Urlaub H."/>
            <person name="Rauhut R."/>
            <person name="Elbashir S."/>
            <person name="Tuschl T."/>
            <person name="Luehrmann R."/>
        </authorList>
    </citation>
    <scope>IDENTIFICATION</scope>
    <scope>IDENTIFICATION IN A COMPLEX WITH THE U11/U12 SPLICEOSOME</scope>
    <scope>IDENTIFICATION BY MASS SPECTROMETRY</scope>
    <scope>SUBCELLULAR LOCATION</scope>
</reference>
<reference key="6">
    <citation type="journal article" date="2017" name="Nat. Struct. Mol. Biol.">
        <title>Site-specific mapping of the human SUMO proteome reveals co-modification with phosphorylation.</title>
        <authorList>
            <person name="Hendriks I.A."/>
            <person name="Lyon D."/>
            <person name="Young C."/>
            <person name="Jensen L.J."/>
            <person name="Vertegaal A.C."/>
            <person name="Nielsen M.L."/>
        </authorList>
    </citation>
    <scope>SUMOYLATION [LARGE SCALE ANALYSIS] AT LYS-172</scope>
    <scope>IDENTIFICATION BY MASS SPECTROMETRY [LARGE SCALE ANALYSIS]</scope>
</reference>
<proteinExistence type="evidence at protein level"/>
<accession>Q16560</accession>
<accession>A8K262</accession>
<accession>Q5XKN9</accession>
<dbReference type="EMBL" id="U44798">
    <property type="protein sequence ID" value="AAA86654.1"/>
    <property type="molecule type" value="mRNA"/>
</dbReference>
<dbReference type="EMBL" id="U44799">
    <property type="protein sequence ID" value="AAA86655.1"/>
    <property type="molecule type" value="mRNA"/>
</dbReference>
<dbReference type="EMBL" id="AK290127">
    <property type="protein sequence ID" value="BAF82816.1"/>
    <property type="molecule type" value="mRNA"/>
</dbReference>
<dbReference type="EMBL" id="CH471054">
    <property type="protein sequence ID" value="EAW98412.1"/>
    <property type="molecule type" value="Genomic_DNA"/>
</dbReference>
<dbReference type="EMBL" id="BC009622">
    <property type="protein sequence ID" value="AAH09622.1"/>
    <property type="molecule type" value="mRNA"/>
</dbReference>
<dbReference type="EMBL" id="BC047678">
    <property type="protein sequence ID" value="AAH47678.1"/>
    <property type="molecule type" value="mRNA"/>
</dbReference>
<dbReference type="EMBL" id="BC054034">
    <property type="protein sequence ID" value="AAH54034.1"/>
    <property type="molecule type" value="mRNA"/>
</dbReference>
<dbReference type="EMBL" id="BC093671">
    <property type="protein sequence ID" value="AAH93671.1"/>
    <property type="molecule type" value="mRNA"/>
</dbReference>
<dbReference type="EMBL" id="BC111955">
    <property type="protein sequence ID" value="AAI11956.1"/>
    <property type="molecule type" value="mRNA"/>
</dbReference>
<dbReference type="EMBL" id="BK005197">
    <property type="protein sequence ID" value="DAA05495.1"/>
    <property type="molecule type" value="mRNA"/>
</dbReference>
<dbReference type="CCDS" id="CCDS45005.1">
    <molecule id="Q16560-2"/>
</dbReference>
<dbReference type="CCDS" id="CCDS9249.1">
    <molecule id="Q16560-1"/>
</dbReference>
<dbReference type="PIR" id="G02371">
    <property type="entry name" value="G02371"/>
</dbReference>
<dbReference type="RefSeq" id="NP_073208.1">
    <molecule id="Q16560-1"/>
    <property type="nucleotide sequence ID" value="NM_022717.4"/>
</dbReference>
<dbReference type="RefSeq" id="NP_851030.1">
    <molecule id="Q16560-2"/>
    <property type="nucleotide sequence ID" value="NM_180699.3"/>
</dbReference>
<dbReference type="RefSeq" id="XP_006719267.1">
    <property type="nucleotide sequence ID" value="XM_006719204.3"/>
</dbReference>
<dbReference type="RefSeq" id="XP_016874213.1">
    <property type="nucleotide sequence ID" value="XM_017018724.1"/>
</dbReference>
<dbReference type="PDB" id="8R7N">
    <property type="method" value="EM"/>
    <property type="resolution" value="3.40 A"/>
    <property type="chains" value="C=1-246"/>
</dbReference>
<dbReference type="PDB" id="8Y6O">
    <property type="method" value="EM"/>
    <property type="resolution" value="3.38 A"/>
    <property type="chains" value="W=1-246"/>
</dbReference>
<dbReference type="PDB" id="9GBW">
    <property type="method" value="EM"/>
    <property type="resolution" value="3.50 A"/>
    <property type="chains" value="C=1-246"/>
</dbReference>
<dbReference type="PDB" id="9GBZ">
    <property type="method" value="EM"/>
    <property type="resolution" value="3.40 A"/>
    <property type="chains" value="C=1-246"/>
</dbReference>
<dbReference type="PDB" id="9GCM">
    <property type="method" value="EM"/>
    <property type="resolution" value="3.10 A"/>
    <property type="chains" value="C=1-246"/>
</dbReference>
<dbReference type="PDBsum" id="8R7N"/>
<dbReference type="PDBsum" id="8Y6O"/>
<dbReference type="PDBsum" id="9GBW"/>
<dbReference type="PDBsum" id="9GBZ"/>
<dbReference type="PDBsum" id="9GCM"/>
<dbReference type="EMDB" id="EMD-18984"/>
<dbReference type="EMDB" id="EMD-38993"/>
<dbReference type="EMDB" id="EMD-51223"/>
<dbReference type="EMDB" id="EMD-51225"/>
<dbReference type="EMDB" id="EMD-51234"/>
<dbReference type="SMR" id="Q16560"/>
<dbReference type="BioGRID" id="116250">
    <property type="interactions" value="42"/>
</dbReference>
<dbReference type="CORUM" id="Q16560"/>
<dbReference type="FunCoup" id="Q16560">
    <property type="interactions" value="2465"/>
</dbReference>
<dbReference type="IntAct" id="Q16560">
    <property type="interactions" value="41"/>
</dbReference>
<dbReference type="MINT" id="Q16560"/>
<dbReference type="STRING" id="9606.ENSP00000403310"/>
<dbReference type="iPTMnet" id="Q16560"/>
<dbReference type="PhosphoSitePlus" id="Q16560"/>
<dbReference type="BioMuta" id="SNRNP35"/>
<dbReference type="DMDM" id="74754517"/>
<dbReference type="jPOST" id="Q16560"/>
<dbReference type="MassIVE" id="Q16560"/>
<dbReference type="PaxDb" id="9606-ENSP00000403310"/>
<dbReference type="PeptideAtlas" id="Q16560"/>
<dbReference type="ProteomicsDB" id="60917">
    <molecule id="Q16560-1"/>
</dbReference>
<dbReference type="ProteomicsDB" id="60918">
    <molecule id="Q16560-2"/>
</dbReference>
<dbReference type="Pumba" id="Q16560"/>
<dbReference type="Antibodypedia" id="31812">
    <property type="antibodies" value="54 antibodies from 18 providers"/>
</dbReference>
<dbReference type="DNASU" id="11066"/>
<dbReference type="Ensembl" id="ENST00000350887.5">
    <molecule id="Q16560-1"/>
    <property type="protein sequence ID" value="ENSP00000340774.5"/>
    <property type="gene ID" value="ENSG00000184209.15"/>
</dbReference>
<dbReference type="Ensembl" id="ENST00000412157.2">
    <molecule id="Q16560-2"/>
    <property type="protein sequence ID" value="ENSP00000403310.2"/>
    <property type="gene ID" value="ENSG00000184209.15"/>
</dbReference>
<dbReference type="Ensembl" id="ENST00000526639.3">
    <molecule id="Q16560-1"/>
    <property type="protein sequence ID" value="ENSP00000432595.2"/>
    <property type="gene ID" value="ENSG00000184209.15"/>
</dbReference>
<dbReference type="GeneID" id="11066"/>
<dbReference type="KEGG" id="hsa:11066"/>
<dbReference type="MANE-Select" id="ENST00000526639.3">
    <property type="protein sequence ID" value="ENSP00000432595.2"/>
    <property type="RefSeq nucleotide sequence ID" value="NM_022717.4"/>
    <property type="RefSeq protein sequence ID" value="NP_073208.1"/>
</dbReference>
<dbReference type="UCSC" id="uc001ufb.2">
    <molecule id="Q16560-1"/>
    <property type="organism name" value="human"/>
</dbReference>
<dbReference type="AGR" id="HGNC:30852"/>
<dbReference type="CTD" id="11066"/>
<dbReference type="DisGeNET" id="11066"/>
<dbReference type="GeneCards" id="SNRNP35"/>
<dbReference type="HGNC" id="HGNC:30852">
    <property type="gene designation" value="SNRNP35"/>
</dbReference>
<dbReference type="HPA" id="ENSG00000184209">
    <property type="expression patterns" value="Low tissue specificity"/>
</dbReference>
<dbReference type="MIM" id="619631">
    <property type="type" value="gene"/>
</dbReference>
<dbReference type="neXtProt" id="NX_Q16560"/>
<dbReference type="OpenTargets" id="ENSG00000184209"/>
<dbReference type="PharmGKB" id="PA164726115"/>
<dbReference type="VEuPathDB" id="HostDB:ENSG00000184209"/>
<dbReference type="eggNOG" id="KOG0113">
    <property type="taxonomic scope" value="Eukaryota"/>
</dbReference>
<dbReference type="GeneTree" id="ENSGT00940000157648"/>
<dbReference type="HOGENOM" id="CLU_035088_1_0_1"/>
<dbReference type="InParanoid" id="Q16560"/>
<dbReference type="OMA" id="FERSRVM"/>
<dbReference type="OrthoDB" id="6159137at2759"/>
<dbReference type="PAN-GO" id="Q16560">
    <property type="GO annotations" value="4 GO annotations based on evolutionary models"/>
</dbReference>
<dbReference type="PhylomeDB" id="Q16560"/>
<dbReference type="TreeFam" id="TF331614"/>
<dbReference type="PathwayCommons" id="Q16560"/>
<dbReference type="Reactome" id="R-HSA-72165">
    <property type="pathway name" value="mRNA Splicing - Minor Pathway"/>
</dbReference>
<dbReference type="SignaLink" id="Q16560"/>
<dbReference type="BioGRID-ORCS" id="11066">
    <property type="hits" value="750 hits in 1165 CRISPR screens"/>
</dbReference>
<dbReference type="ChiTaRS" id="SNRNP35">
    <property type="organism name" value="human"/>
</dbReference>
<dbReference type="GenomeRNAi" id="11066"/>
<dbReference type="Pharos" id="Q16560">
    <property type="development level" value="Tdark"/>
</dbReference>
<dbReference type="PRO" id="PR:Q16560"/>
<dbReference type="Proteomes" id="UP000005640">
    <property type="component" value="Chromosome 12"/>
</dbReference>
<dbReference type="RNAct" id="Q16560">
    <property type="molecule type" value="protein"/>
</dbReference>
<dbReference type="Bgee" id="ENSG00000184209">
    <property type="expression patterns" value="Expressed in tendon of biceps brachii and 204 other cell types or tissues"/>
</dbReference>
<dbReference type="ExpressionAtlas" id="Q16560">
    <property type="expression patterns" value="baseline and differential"/>
</dbReference>
<dbReference type="GO" id="GO:0005730">
    <property type="term" value="C:nucleolus"/>
    <property type="evidence" value="ECO:0000314"/>
    <property type="project" value="HPA"/>
</dbReference>
<dbReference type="GO" id="GO:0005654">
    <property type="term" value="C:nucleoplasm"/>
    <property type="evidence" value="ECO:0000304"/>
    <property type="project" value="Reactome"/>
</dbReference>
<dbReference type="GO" id="GO:0005634">
    <property type="term" value="C:nucleus"/>
    <property type="evidence" value="ECO:0000314"/>
    <property type="project" value="MGI"/>
</dbReference>
<dbReference type="GO" id="GO:0005689">
    <property type="term" value="C:U12-type spliceosomal complex"/>
    <property type="evidence" value="ECO:0000314"/>
    <property type="project" value="HGNC-UCL"/>
</dbReference>
<dbReference type="GO" id="GO:0003729">
    <property type="term" value="F:mRNA binding"/>
    <property type="evidence" value="ECO:0000318"/>
    <property type="project" value="GO_Central"/>
</dbReference>
<dbReference type="GO" id="GO:0017069">
    <property type="term" value="F:snRNA binding"/>
    <property type="evidence" value="ECO:0000318"/>
    <property type="project" value="GO_Central"/>
</dbReference>
<dbReference type="GO" id="GO:0000398">
    <property type="term" value="P:mRNA splicing, via spliceosome"/>
    <property type="evidence" value="ECO:0000318"/>
    <property type="project" value="GO_Central"/>
</dbReference>
<dbReference type="GO" id="GO:0008380">
    <property type="term" value="P:RNA splicing"/>
    <property type="evidence" value="ECO:0000305"/>
    <property type="project" value="HGNC-UCL"/>
</dbReference>
<dbReference type="CDD" id="cd12237">
    <property type="entry name" value="RRM_snRNP35"/>
    <property type="match status" value="1"/>
</dbReference>
<dbReference type="FunFam" id="3.30.70.330:FF:000132">
    <property type="entry name" value="Small nuclear ribonucleoprotein U11/U12 subunit 35"/>
    <property type="match status" value="1"/>
</dbReference>
<dbReference type="Gene3D" id="3.30.70.330">
    <property type="match status" value="1"/>
</dbReference>
<dbReference type="InterPro" id="IPR012677">
    <property type="entry name" value="Nucleotide-bd_a/b_plait_sf"/>
</dbReference>
<dbReference type="InterPro" id="IPR035979">
    <property type="entry name" value="RBD_domain_sf"/>
</dbReference>
<dbReference type="InterPro" id="IPR000504">
    <property type="entry name" value="RRM_dom"/>
</dbReference>
<dbReference type="InterPro" id="IPR034146">
    <property type="entry name" value="snRNP35_RRM"/>
</dbReference>
<dbReference type="InterPro" id="IPR051183">
    <property type="entry name" value="U1_U11-U12_snRNP_70-35kDa"/>
</dbReference>
<dbReference type="PANTHER" id="PTHR13952">
    <property type="entry name" value="U1 SMALL NUCLEAR RIBONUCLEOPROTEIN 70 KD"/>
    <property type="match status" value="1"/>
</dbReference>
<dbReference type="PANTHER" id="PTHR13952:SF6">
    <property type="entry name" value="U11_U12 SMALL NUCLEAR RIBONUCLEOPROTEIN 35 KDA PROTEIN"/>
    <property type="match status" value="1"/>
</dbReference>
<dbReference type="Pfam" id="PF00076">
    <property type="entry name" value="RRM_1"/>
    <property type="match status" value="1"/>
</dbReference>
<dbReference type="SMART" id="SM00360">
    <property type="entry name" value="RRM"/>
    <property type="match status" value="1"/>
</dbReference>
<dbReference type="SUPFAM" id="SSF54928">
    <property type="entry name" value="RNA-binding domain, RBD"/>
    <property type="match status" value="1"/>
</dbReference>
<dbReference type="PROSITE" id="PS50102">
    <property type="entry name" value="RRM"/>
    <property type="match status" value="1"/>
</dbReference>
<name>U1SBP_HUMAN</name>
<gene>
    <name type="primary">SNRNP35</name>
    <name type="synonym">HM1</name>
    <name type="synonym">U1SNRNPBP</name>
</gene>
<keyword id="KW-0002">3D-structure</keyword>
<keyword id="KW-0025">Alternative splicing</keyword>
<keyword id="KW-1017">Isopeptide bond</keyword>
<keyword id="KW-0507">mRNA processing</keyword>
<keyword id="KW-0508">mRNA splicing</keyword>
<keyword id="KW-0539">Nucleus</keyword>
<keyword id="KW-1267">Proteomics identification</keyword>
<keyword id="KW-1185">Reference proteome</keyword>
<keyword id="KW-0694">RNA-binding</keyword>
<keyword id="KW-0747">Spliceosome</keyword>
<keyword id="KW-0832">Ubl conjugation</keyword>
<evidence type="ECO:0000255" key="1">
    <source>
        <dbReference type="PROSITE-ProRule" id="PRU00176"/>
    </source>
</evidence>
<evidence type="ECO:0000256" key="2">
    <source>
        <dbReference type="SAM" id="MobiDB-lite"/>
    </source>
</evidence>
<evidence type="ECO:0000269" key="3">
    <source>
    </source>
</evidence>
<evidence type="ECO:0000269" key="4">
    <source>
    </source>
</evidence>
<evidence type="ECO:0000303" key="5">
    <source>
    </source>
</evidence>
<evidence type="ECO:0007744" key="6">
    <source>
    </source>
</evidence>
<organism>
    <name type="scientific">Homo sapiens</name>
    <name type="common">Human</name>
    <dbReference type="NCBI Taxonomy" id="9606"/>
    <lineage>
        <taxon>Eukaryota</taxon>
        <taxon>Metazoa</taxon>
        <taxon>Chordata</taxon>
        <taxon>Craniata</taxon>
        <taxon>Vertebrata</taxon>
        <taxon>Euteleostomi</taxon>
        <taxon>Mammalia</taxon>
        <taxon>Eutheria</taxon>
        <taxon>Euarchontoglires</taxon>
        <taxon>Primates</taxon>
        <taxon>Haplorrhini</taxon>
        <taxon>Catarrhini</taxon>
        <taxon>Hominidae</taxon>
        <taxon>Homo</taxon>
    </lineage>
</organism>
<sequence length="246" mass="29450">MNDWMPIAKEYDPLKAGSIDGTDEDPHDRAVWRAMLARYVPNKGVIGDPLLTLFVARLNLQTKEDKLKEVFSRYGDIRRLRLVRDLVTGFSKGYAFIEYKEERAVIKAYRDADGLVIDQHEIFVDYELERTLKGWIPRRLGGGLGGKKESGQLRFGGRDRPFRKPINLPVVKNDLYREGKRERRERSRSRERHWDSRTRDRDHDRGREKRWQEREPTRVWPDNDWERERDFRDDRIKGREKKERGK</sequence>